<feature type="chain" id="PRO_0000152154" description="Putative leucine--tRNA ligase, cytoplasmic">
    <location>
        <begin position="1"/>
        <end position="1111"/>
    </location>
</feature>
<feature type="short sequence motif" description="'HIGH' region">
    <location>
        <begin position="74"/>
        <end position="84"/>
    </location>
</feature>
<feature type="short sequence motif" description="'KMSKS' region">
    <location>
        <begin position="737"/>
        <end position="741"/>
    </location>
</feature>
<feature type="binding site" evidence="1">
    <location>
        <position position="740"/>
    </location>
    <ligand>
        <name>ATP</name>
        <dbReference type="ChEBI" id="CHEBI:30616"/>
    </ligand>
</feature>
<feature type="modified residue" description="Phosphoserine" evidence="3">
    <location>
        <position position="460"/>
    </location>
</feature>
<keyword id="KW-0030">Aminoacyl-tRNA synthetase</keyword>
<keyword id="KW-0067">ATP-binding</keyword>
<keyword id="KW-0963">Cytoplasm</keyword>
<keyword id="KW-0436">Ligase</keyword>
<keyword id="KW-0547">Nucleotide-binding</keyword>
<keyword id="KW-0597">Phosphoprotein</keyword>
<keyword id="KW-0648">Protein biosynthesis</keyword>
<keyword id="KW-1185">Reference proteome</keyword>
<comment type="catalytic activity">
    <reaction>
        <text>tRNA(Leu) + L-leucine + ATP = L-leucyl-tRNA(Leu) + AMP + diphosphate</text>
        <dbReference type="Rhea" id="RHEA:11688"/>
        <dbReference type="Rhea" id="RHEA-COMP:9613"/>
        <dbReference type="Rhea" id="RHEA-COMP:9622"/>
        <dbReference type="ChEBI" id="CHEBI:30616"/>
        <dbReference type="ChEBI" id="CHEBI:33019"/>
        <dbReference type="ChEBI" id="CHEBI:57427"/>
        <dbReference type="ChEBI" id="CHEBI:78442"/>
        <dbReference type="ChEBI" id="CHEBI:78494"/>
        <dbReference type="ChEBI" id="CHEBI:456215"/>
        <dbReference type="EC" id="6.1.1.4"/>
    </reaction>
</comment>
<comment type="subcellular location">
    <subcellularLocation>
        <location evidence="2">Cytoplasm</location>
    </subcellularLocation>
</comment>
<comment type="similarity">
    <text evidence="4">Belongs to the class-I aminoacyl-tRNA synthetase family.</text>
</comment>
<name>SYLC_SCHPO</name>
<gene>
    <name type="primary">lrs1</name>
    <name type="ORF">SPAC26F1.13c</name>
</gene>
<reference key="1">
    <citation type="journal article" date="2002" name="Nature">
        <title>The genome sequence of Schizosaccharomyces pombe.</title>
        <authorList>
            <person name="Wood V."/>
            <person name="Gwilliam R."/>
            <person name="Rajandream M.A."/>
            <person name="Lyne M.H."/>
            <person name="Lyne R."/>
            <person name="Stewart A."/>
            <person name="Sgouros J.G."/>
            <person name="Peat N."/>
            <person name="Hayles J."/>
            <person name="Baker S.G."/>
            <person name="Basham D."/>
            <person name="Bowman S."/>
            <person name="Brooks K."/>
            <person name="Brown D."/>
            <person name="Brown S."/>
            <person name="Chillingworth T."/>
            <person name="Churcher C.M."/>
            <person name="Collins M."/>
            <person name="Connor R."/>
            <person name="Cronin A."/>
            <person name="Davis P."/>
            <person name="Feltwell T."/>
            <person name="Fraser A."/>
            <person name="Gentles S."/>
            <person name="Goble A."/>
            <person name="Hamlin N."/>
            <person name="Harris D.E."/>
            <person name="Hidalgo J."/>
            <person name="Hodgson G."/>
            <person name="Holroyd S."/>
            <person name="Hornsby T."/>
            <person name="Howarth S."/>
            <person name="Huckle E.J."/>
            <person name="Hunt S."/>
            <person name="Jagels K."/>
            <person name="James K.D."/>
            <person name="Jones L."/>
            <person name="Jones M."/>
            <person name="Leather S."/>
            <person name="McDonald S."/>
            <person name="McLean J."/>
            <person name="Mooney P."/>
            <person name="Moule S."/>
            <person name="Mungall K.L."/>
            <person name="Murphy L.D."/>
            <person name="Niblett D."/>
            <person name="Odell C."/>
            <person name="Oliver K."/>
            <person name="O'Neil S."/>
            <person name="Pearson D."/>
            <person name="Quail M.A."/>
            <person name="Rabbinowitsch E."/>
            <person name="Rutherford K.M."/>
            <person name="Rutter S."/>
            <person name="Saunders D."/>
            <person name="Seeger K."/>
            <person name="Sharp S."/>
            <person name="Skelton J."/>
            <person name="Simmonds M.N."/>
            <person name="Squares R."/>
            <person name="Squares S."/>
            <person name="Stevens K."/>
            <person name="Taylor K."/>
            <person name="Taylor R.G."/>
            <person name="Tivey A."/>
            <person name="Walsh S.V."/>
            <person name="Warren T."/>
            <person name="Whitehead S."/>
            <person name="Woodward J.R."/>
            <person name="Volckaert G."/>
            <person name="Aert R."/>
            <person name="Robben J."/>
            <person name="Grymonprez B."/>
            <person name="Weltjens I."/>
            <person name="Vanstreels E."/>
            <person name="Rieger M."/>
            <person name="Schaefer M."/>
            <person name="Mueller-Auer S."/>
            <person name="Gabel C."/>
            <person name="Fuchs M."/>
            <person name="Duesterhoeft A."/>
            <person name="Fritzc C."/>
            <person name="Holzer E."/>
            <person name="Moestl D."/>
            <person name="Hilbert H."/>
            <person name="Borzym K."/>
            <person name="Langer I."/>
            <person name="Beck A."/>
            <person name="Lehrach H."/>
            <person name="Reinhardt R."/>
            <person name="Pohl T.M."/>
            <person name="Eger P."/>
            <person name="Zimmermann W."/>
            <person name="Wedler H."/>
            <person name="Wambutt R."/>
            <person name="Purnelle B."/>
            <person name="Goffeau A."/>
            <person name="Cadieu E."/>
            <person name="Dreano S."/>
            <person name="Gloux S."/>
            <person name="Lelaure V."/>
            <person name="Mottier S."/>
            <person name="Galibert F."/>
            <person name="Aves S.J."/>
            <person name="Xiang Z."/>
            <person name="Hunt C."/>
            <person name="Moore K."/>
            <person name="Hurst S.M."/>
            <person name="Lucas M."/>
            <person name="Rochet M."/>
            <person name="Gaillardin C."/>
            <person name="Tallada V.A."/>
            <person name="Garzon A."/>
            <person name="Thode G."/>
            <person name="Daga R.R."/>
            <person name="Cruzado L."/>
            <person name="Jimenez J."/>
            <person name="Sanchez M."/>
            <person name="del Rey F."/>
            <person name="Benito J."/>
            <person name="Dominguez A."/>
            <person name="Revuelta J.L."/>
            <person name="Moreno S."/>
            <person name="Armstrong J."/>
            <person name="Forsburg S.L."/>
            <person name="Cerutti L."/>
            <person name="Lowe T."/>
            <person name="McCombie W.R."/>
            <person name="Paulsen I."/>
            <person name="Potashkin J."/>
            <person name="Shpakovski G.V."/>
            <person name="Ussery D."/>
            <person name="Barrell B.G."/>
            <person name="Nurse P."/>
        </authorList>
    </citation>
    <scope>NUCLEOTIDE SEQUENCE [LARGE SCALE GENOMIC DNA]</scope>
    <source>
        <strain>972 / ATCC 24843</strain>
    </source>
</reference>
<reference key="2">
    <citation type="journal article" date="1997" name="DNA Res.">
        <title>Identification of open reading frames in Schizosaccharomyces pombe cDNAs.</title>
        <authorList>
            <person name="Yoshioka S."/>
            <person name="Kato K."/>
            <person name="Nakai K."/>
            <person name="Okayama H."/>
            <person name="Nojima H."/>
        </authorList>
    </citation>
    <scope>NUCLEOTIDE SEQUENCE [LARGE SCALE MRNA] OF 739-1110</scope>
    <source>
        <strain>PR745</strain>
    </source>
</reference>
<reference key="3">
    <citation type="journal article" date="2006" name="Nat. Biotechnol.">
        <title>ORFeome cloning and global analysis of protein localization in the fission yeast Schizosaccharomyces pombe.</title>
        <authorList>
            <person name="Matsuyama A."/>
            <person name="Arai R."/>
            <person name="Yashiroda Y."/>
            <person name="Shirai A."/>
            <person name="Kamata A."/>
            <person name="Sekido S."/>
            <person name="Kobayashi Y."/>
            <person name="Hashimoto A."/>
            <person name="Hamamoto M."/>
            <person name="Hiraoka Y."/>
            <person name="Horinouchi S."/>
            <person name="Yoshida M."/>
        </authorList>
    </citation>
    <scope>SUBCELLULAR LOCATION [LARGE SCALE ANALYSIS]</scope>
</reference>
<reference key="4">
    <citation type="journal article" date="2008" name="J. Proteome Res.">
        <title>Phosphoproteome analysis of fission yeast.</title>
        <authorList>
            <person name="Wilson-Grady J.T."/>
            <person name="Villen J."/>
            <person name="Gygi S.P."/>
        </authorList>
    </citation>
    <scope>PHOSPHORYLATION [LARGE SCALE ANALYSIS] AT SER-460</scope>
    <scope>IDENTIFICATION BY MASS SPECTROMETRY</scope>
</reference>
<evidence type="ECO:0000250" key="1"/>
<evidence type="ECO:0000269" key="2">
    <source>
    </source>
</evidence>
<evidence type="ECO:0000269" key="3">
    <source>
    </source>
</evidence>
<evidence type="ECO:0000305" key="4"/>
<proteinExistence type="evidence at protein level"/>
<protein>
    <recommendedName>
        <fullName>Putative leucine--tRNA ligase, cytoplasmic</fullName>
        <ecNumber>6.1.1.4</ecNumber>
    </recommendedName>
    <alternativeName>
        <fullName>Leucyl-tRNA synthetase</fullName>
        <shortName>LeuRS</shortName>
    </alternativeName>
</protein>
<sequence length="1111" mass="126452">MATTEPSVEQLETKTAKLKLENTTKRDTLIELEKKYQQKWQEEKAFEVDAPLEDVPIDELRKKYPKFFGNMPYPYMNGALHLGHAFTLSKVEFTTAFERLNGKRVLFPMGFHCTGMPICASADRLSREIEMFGPSFDVPEEKEEEVEVEVKTPNAREDVTKHSGKKSKAAAKTAAVKYQFQIMESLGVPRTEIHKFADAKYWLSYFPPLCQRDCTEFGLGIDWRRSFITTDVNPYYDSFVRWQVNHLHDSGKIKFGERYTVYSIKDGQPCMDHDRKSGEGVGPQEYTGIKMEVLEFPEAARKALQSIDLSNKKVCMIAATLRPETMYGQTNCYVGPNITYGIYESNVPNELFICTRRAANNMAYQKLSKERGVVSELGTIKGQDLIGALVNAPLSVHKQVYVLPMETVLATKGTGVVTSVPSDSPDDFATLTELRKKAEFYHLNPEWMKYEAVPIIRTPSYGDMCAEFLCKKLKIQSPKDVKQLAQAKELAYKECFYQGTMIIGKYSGEKVETAKPKVRKELIDQGLAFVYNEPEGQVISRSGDDCIVALCDQWFLDYGEASWKAVTEKALDRLNTFSPEVRNGFLKTLDWLSQWACARSYGLGTRLPWDPQFLVESLTDSTIYMAYYTICHLLHSDVYGKVPGALNIKPEQMTPEVWDHVFRQAPKPKNTSISDEALARLCREFQYFYPFDIRASGKDLVPNHLTFCLYTHTAIFDEKYWPKGIRANGHLLMNGEKMSKSTGNFMTLHEATKKFGADATRLALADAGDTVDDANFEEALANSAILRLYTQEAWCKEMMENLDNLRTGPYNFHDKVFENEINQLIESSREAFSATLFKAALKSCFYDLQNARDWYREVTADRKMHRDLVCRWIETQVLLLATFAPHWSEHIWLTTLKKPQSIHVSGRFPQVSSPVNTALSNSLLYIRTLSRVIREAEAAQLKRQKKGKGMLFDPSKPKRLTVFVAEKFPEWQAQYVALLQKYYNESENKFDDKAIISSVDKKEMKRAMPFIQQFKQSVINRGEHVSANSIFSRELGFNELEVLREVKPYLVRNVGIQELRIVLLQKPADKSSAAIGLVESGSDAGATVEIAPNFANTVPGQPTFLFENVSA</sequence>
<organism>
    <name type="scientific">Schizosaccharomyces pombe (strain 972 / ATCC 24843)</name>
    <name type="common">Fission yeast</name>
    <dbReference type="NCBI Taxonomy" id="284812"/>
    <lineage>
        <taxon>Eukaryota</taxon>
        <taxon>Fungi</taxon>
        <taxon>Dikarya</taxon>
        <taxon>Ascomycota</taxon>
        <taxon>Taphrinomycotina</taxon>
        <taxon>Schizosaccharomycetes</taxon>
        <taxon>Schizosaccharomycetales</taxon>
        <taxon>Schizosaccharomycetaceae</taxon>
        <taxon>Schizosaccharomyces</taxon>
    </lineage>
</organism>
<dbReference type="EC" id="6.1.1.4"/>
<dbReference type="EMBL" id="CU329670">
    <property type="protein sequence ID" value="CAA97370.1"/>
    <property type="molecule type" value="Genomic_DNA"/>
</dbReference>
<dbReference type="EMBL" id="D89170">
    <property type="protein sequence ID" value="BAA13832.1"/>
    <property type="molecule type" value="mRNA"/>
</dbReference>
<dbReference type="PIR" id="T38407">
    <property type="entry name" value="T38407"/>
</dbReference>
<dbReference type="PIR" id="T42535">
    <property type="entry name" value="T42535"/>
</dbReference>
<dbReference type="RefSeq" id="NP_594882.1">
    <property type="nucleotide sequence ID" value="NM_001020311.2"/>
</dbReference>
<dbReference type="SMR" id="Q10490"/>
<dbReference type="BioGRID" id="279123">
    <property type="interactions" value="5"/>
</dbReference>
<dbReference type="FunCoup" id="Q10490">
    <property type="interactions" value="814"/>
</dbReference>
<dbReference type="STRING" id="284812.Q10490"/>
<dbReference type="iPTMnet" id="Q10490"/>
<dbReference type="PaxDb" id="4896-SPAC26F1.13c.1"/>
<dbReference type="EnsemblFungi" id="SPAC26F1.13c.1">
    <property type="protein sequence ID" value="SPAC26F1.13c.1:pep"/>
    <property type="gene ID" value="SPAC26F1.13c"/>
</dbReference>
<dbReference type="GeneID" id="2542670"/>
<dbReference type="KEGG" id="spo:2542670"/>
<dbReference type="PomBase" id="SPAC26F1.13c">
    <property type="gene designation" value="lrs1"/>
</dbReference>
<dbReference type="VEuPathDB" id="FungiDB:SPAC26F1.13c"/>
<dbReference type="eggNOG" id="KOG0437">
    <property type="taxonomic scope" value="Eukaryota"/>
</dbReference>
<dbReference type="HOGENOM" id="CLU_004174_1_1_1"/>
<dbReference type="InParanoid" id="Q10490"/>
<dbReference type="OMA" id="KFIEWQF"/>
<dbReference type="PhylomeDB" id="Q10490"/>
<dbReference type="PRO" id="PR:Q10490"/>
<dbReference type="Proteomes" id="UP000002485">
    <property type="component" value="Chromosome I"/>
</dbReference>
<dbReference type="GO" id="GO:0005829">
    <property type="term" value="C:cytosol"/>
    <property type="evidence" value="ECO:0007005"/>
    <property type="project" value="PomBase"/>
</dbReference>
<dbReference type="GO" id="GO:0002161">
    <property type="term" value="F:aminoacyl-tRNA deacylase activity"/>
    <property type="evidence" value="ECO:0007669"/>
    <property type="project" value="InterPro"/>
</dbReference>
<dbReference type="GO" id="GO:0005524">
    <property type="term" value="F:ATP binding"/>
    <property type="evidence" value="ECO:0007669"/>
    <property type="project" value="UniProtKB-KW"/>
</dbReference>
<dbReference type="GO" id="GO:0004823">
    <property type="term" value="F:leucine-tRNA ligase activity"/>
    <property type="evidence" value="ECO:0000318"/>
    <property type="project" value="GO_Central"/>
</dbReference>
<dbReference type="GO" id="GO:0002181">
    <property type="term" value="P:cytoplasmic translation"/>
    <property type="evidence" value="ECO:0000303"/>
    <property type="project" value="PomBase"/>
</dbReference>
<dbReference type="GO" id="GO:0006429">
    <property type="term" value="P:leucyl-tRNA aminoacylation"/>
    <property type="evidence" value="ECO:0000318"/>
    <property type="project" value="GO_Central"/>
</dbReference>
<dbReference type="CDD" id="cd07959">
    <property type="entry name" value="Anticodon_Ia_Leu_AEc"/>
    <property type="match status" value="1"/>
</dbReference>
<dbReference type="CDD" id="cd00812">
    <property type="entry name" value="LeuRS_core"/>
    <property type="match status" value="1"/>
</dbReference>
<dbReference type="FunFam" id="1.10.730.10:FF:000020">
    <property type="entry name" value="Leucine--tRNA ligase cytoplasmic"/>
    <property type="match status" value="1"/>
</dbReference>
<dbReference type="FunFam" id="3.90.740.10:FF:000001">
    <property type="entry name" value="Leucine--tRNA ligase, cytoplasmic"/>
    <property type="match status" value="1"/>
</dbReference>
<dbReference type="Gene3D" id="3.40.50.620">
    <property type="entry name" value="HUPs"/>
    <property type="match status" value="1"/>
</dbReference>
<dbReference type="Gene3D" id="1.10.730.10">
    <property type="entry name" value="Isoleucyl-tRNA Synthetase, Domain 1"/>
    <property type="match status" value="1"/>
</dbReference>
<dbReference type="Gene3D" id="3.90.740.10">
    <property type="entry name" value="Valyl/Leucyl/Isoleucyl-tRNA synthetase, editing domain"/>
    <property type="match status" value="1"/>
</dbReference>
<dbReference type="InterPro" id="IPR002300">
    <property type="entry name" value="aa-tRNA-synth_Ia"/>
</dbReference>
<dbReference type="InterPro" id="IPR004493">
    <property type="entry name" value="Leu-tRNA-synth_Ia_arc/euk"/>
</dbReference>
<dbReference type="InterPro" id="IPR013155">
    <property type="entry name" value="M/V/L/I-tRNA-synth_anticd-bd"/>
</dbReference>
<dbReference type="InterPro" id="IPR055416">
    <property type="entry name" value="RBD_LARS1"/>
</dbReference>
<dbReference type="InterPro" id="IPR014729">
    <property type="entry name" value="Rossmann-like_a/b/a_fold"/>
</dbReference>
<dbReference type="InterPro" id="IPR009080">
    <property type="entry name" value="tRNAsynth_Ia_anticodon-bd"/>
</dbReference>
<dbReference type="InterPro" id="IPR009008">
    <property type="entry name" value="Val/Leu/Ile-tRNA-synth_edit"/>
</dbReference>
<dbReference type="NCBIfam" id="TIGR00395">
    <property type="entry name" value="leuS_arch"/>
    <property type="match status" value="1"/>
</dbReference>
<dbReference type="NCBIfam" id="NF008957">
    <property type="entry name" value="PRK12300.1"/>
    <property type="match status" value="1"/>
</dbReference>
<dbReference type="PANTHER" id="PTHR45794:SF1">
    <property type="entry name" value="LEUCINE--TRNA LIGASE, CYTOPLASMIC"/>
    <property type="match status" value="1"/>
</dbReference>
<dbReference type="PANTHER" id="PTHR45794">
    <property type="entry name" value="LEUCYL-TRNA SYNTHETASE"/>
    <property type="match status" value="1"/>
</dbReference>
<dbReference type="Pfam" id="PF08264">
    <property type="entry name" value="Anticodon_1"/>
    <property type="match status" value="1"/>
</dbReference>
<dbReference type="Pfam" id="PF24810">
    <property type="entry name" value="RBD_LARS1"/>
    <property type="match status" value="1"/>
</dbReference>
<dbReference type="Pfam" id="PF00133">
    <property type="entry name" value="tRNA-synt_1"/>
    <property type="match status" value="2"/>
</dbReference>
<dbReference type="SUPFAM" id="SSF47323">
    <property type="entry name" value="Anticodon-binding domain of a subclass of class I aminoacyl-tRNA synthetases"/>
    <property type="match status" value="1"/>
</dbReference>
<dbReference type="SUPFAM" id="SSF52374">
    <property type="entry name" value="Nucleotidylyl transferase"/>
    <property type="match status" value="1"/>
</dbReference>
<dbReference type="SUPFAM" id="SSF50677">
    <property type="entry name" value="ValRS/IleRS/LeuRS editing domain"/>
    <property type="match status" value="1"/>
</dbReference>
<dbReference type="PROSITE" id="PS00178">
    <property type="entry name" value="AA_TRNA_LIGASE_I"/>
    <property type="match status" value="1"/>
</dbReference>
<accession>Q10490</accession>